<organism>
    <name type="scientific">Anoxybacillus flavithermus (strain DSM 21510 / WK1)</name>
    <dbReference type="NCBI Taxonomy" id="491915"/>
    <lineage>
        <taxon>Bacteria</taxon>
        <taxon>Bacillati</taxon>
        <taxon>Bacillota</taxon>
        <taxon>Bacilli</taxon>
        <taxon>Bacillales</taxon>
        <taxon>Anoxybacillaceae</taxon>
        <taxon>Anoxybacillus</taxon>
    </lineage>
</organism>
<feature type="chain" id="PRO_1000135384" description="Histidinol-phosphate aminotransferase">
    <location>
        <begin position="1"/>
        <end position="371"/>
    </location>
</feature>
<feature type="modified residue" description="N6-(pyridoxal phosphate)lysine" evidence="1">
    <location>
        <position position="222"/>
    </location>
</feature>
<evidence type="ECO:0000255" key="1">
    <source>
        <dbReference type="HAMAP-Rule" id="MF_01023"/>
    </source>
</evidence>
<dbReference type="EC" id="2.6.1.9" evidence="1"/>
<dbReference type="EMBL" id="CP000922">
    <property type="protein sequence ID" value="ACJ33483.1"/>
    <property type="molecule type" value="Genomic_DNA"/>
</dbReference>
<dbReference type="RefSeq" id="WP_012574739.1">
    <property type="nucleotide sequence ID" value="NC_011567.1"/>
</dbReference>
<dbReference type="SMR" id="B7GHJ8"/>
<dbReference type="STRING" id="491915.Aflv_1107"/>
<dbReference type="GeneID" id="7037364"/>
<dbReference type="KEGG" id="afl:Aflv_1107"/>
<dbReference type="PATRIC" id="fig|491915.6.peg.1130"/>
<dbReference type="eggNOG" id="COG0079">
    <property type="taxonomic scope" value="Bacteria"/>
</dbReference>
<dbReference type="HOGENOM" id="CLU_017584_3_3_9"/>
<dbReference type="UniPathway" id="UPA00031">
    <property type="reaction ID" value="UER00012"/>
</dbReference>
<dbReference type="Proteomes" id="UP000000742">
    <property type="component" value="Chromosome"/>
</dbReference>
<dbReference type="GO" id="GO:0004400">
    <property type="term" value="F:histidinol-phosphate transaminase activity"/>
    <property type="evidence" value="ECO:0007669"/>
    <property type="project" value="UniProtKB-UniRule"/>
</dbReference>
<dbReference type="GO" id="GO:0030170">
    <property type="term" value="F:pyridoxal phosphate binding"/>
    <property type="evidence" value="ECO:0007669"/>
    <property type="project" value="InterPro"/>
</dbReference>
<dbReference type="GO" id="GO:0000105">
    <property type="term" value="P:L-histidine biosynthetic process"/>
    <property type="evidence" value="ECO:0007669"/>
    <property type="project" value="UniProtKB-UniRule"/>
</dbReference>
<dbReference type="CDD" id="cd00609">
    <property type="entry name" value="AAT_like"/>
    <property type="match status" value="1"/>
</dbReference>
<dbReference type="Gene3D" id="3.90.1150.10">
    <property type="entry name" value="Aspartate Aminotransferase, domain 1"/>
    <property type="match status" value="1"/>
</dbReference>
<dbReference type="Gene3D" id="3.40.640.10">
    <property type="entry name" value="Type I PLP-dependent aspartate aminotransferase-like (Major domain)"/>
    <property type="match status" value="1"/>
</dbReference>
<dbReference type="HAMAP" id="MF_01023">
    <property type="entry name" value="HisC_aminotrans_2"/>
    <property type="match status" value="1"/>
</dbReference>
<dbReference type="InterPro" id="IPR001917">
    <property type="entry name" value="Aminotrans_II_pyridoxalP_BS"/>
</dbReference>
<dbReference type="InterPro" id="IPR004839">
    <property type="entry name" value="Aminotransferase_I/II_large"/>
</dbReference>
<dbReference type="InterPro" id="IPR005861">
    <property type="entry name" value="HisP_aminotrans"/>
</dbReference>
<dbReference type="InterPro" id="IPR050106">
    <property type="entry name" value="HistidinolP_aminotransfase"/>
</dbReference>
<dbReference type="InterPro" id="IPR015424">
    <property type="entry name" value="PyrdxlP-dep_Trfase"/>
</dbReference>
<dbReference type="InterPro" id="IPR015421">
    <property type="entry name" value="PyrdxlP-dep_Trfase_major"/>
</dbReference>
<dbReference type="InterPro" id="IPR015422">
    <property type="entry name" value="PyrdxlP-dep_Trfase_small"/>
</dbReference>
<dbReference type="NCBIfam" id="TIGR01141">
    <property type="entry name" value="hisC"/>
    <property type="match status" value="1"/>
</dbReference>
<dbReference type="PANTHER" id="PTHR43643:SF3">
    <property type="entry name" value="HISTIDINOL-PHOSPHATE AMINOTRANSFERASE"/>
    <property type="match status" value="1"/>
</dbReference>
<dbReference type="PANTHER" id="PTHR43643">
    <property type="entry name" value="HISTIDINOL-PHOSPHATE AMINOTRANSFERASE 2"/>
    <property type="match status" value="1"/>
</dbReference>
<dbReference type="Pfam" id="PF00155">
    <property type="entry name" value="Aminotran_1_2"/>
    <property type="match status" value="1"/>
</dbReference>
<dbReference type="SUPFAM" id="SSF53383">
    <property type="entry name" value="PLP-dependent transferases"/>
    <property type="match status" value="1"/>
</dbReference>
<dbReference type="PROSITE" id="PS00599">
    <property type="entry name" value="AA_TRANSFER_CLASS_2"/>
    <property type="match status" value="1"/>
</dbReference>
<keyword id="KW-0028">Amino-acid biosynthesis</keyword>
<keyword id="KW-0032">Aminotransferase</keyword>
<keyword id="KW-0368">Histidine biosynthesis</keyword>
<keyword id="KW-0663">Pyridoxal phosphate</keyword>
<keyword id="KW-0808">Transferase</keyword>
<accession>B7GHJ8</accession>
<sequence length="371" mass="41993">MKVKQQLKQLKPYQPGKPIEEVKREYQLETVIKLASNENPYGCSPLVRQAVMNELDDLALYPDGYSRTLREALAAHIGISEKQLIFGNGSDEVVQIICRAFLQKGTNTVMATPTFPQYRHNAIIEGAEVREIPLQDGHHHLEAMLEAIDDHTRVVWICSPNNPTGTYVNDASLRAFLNKVPQHVLVVVDEAYYEYVQAEDYPNTVSLLQQYENMMILRTFSKAYGLAALRIGYGIAHEHLLQAIEPAREPFNTSRLAQAAAFAALKDQTFIQQCAQKNKQGLDQFYAFCDEYGLRYYKSEGNFILIDFGFSGDEVFTYLLQRGIIVRSGCALGFPTAVRITVGSAEQNETIIRALTNMLKERRDSFCKETF</sequence>
<reference key="1">
    <citation type="journal article" date="2008" name="Genome Biol.">
        <title>Encapsulated in silica: genome, proteome and physiology of the thermophilic bacterium Anoxybacillus flavithermus WK1.</title>
        <authorList>
            <person name="Saw J.H."/>
            <person name="Mountain B.W."/>
            <person name="Feng L."/>
            <person name="Omelchenko M.V."/>
            <person name="Hou S."/>
            <person name="Saito J.A."/>
            <person name="Stott M.B."/>
            <person name="Li D."/>
            <person name="Zhao G."/>
            <person name="Wu J."/>
            <person name="Galperin M.Y."/>
            <person name="Koonin E.V."/>
            <person name="Makarova K.S."/>
            <person name="Wolf Y.I."/>
            <person name="Rigden D.J."/>
            <person name="Dunfield P.F."/>
            <person name="Wang L."/>
            <person name="Alam M."/>
        </authorList>
    </citation>
    <scope>NUCLEOTIDE SEQUENCE [LARGE SCALE GENOMIC DNA]</scope>
    <source>
        <strain>DSM 21510 / WK1</strain>
    </source>
</reference>
<gene>
    <name evidence="1" type="primary">hisC</name>
    <name type="ordered locus">Aflv_1107</name>
</gene>
<comment type="catalytic activity">
    <reaction evidence="1">
        <text>L-histidinol phosphate + 2-oxoglutarate = 3-(imidazol-4-yl)-2-oxopropyl phosphate + L-glutamate</text>
        <dbReference type="Rhea" id="RHEA:23744"/>
        <dbReference type="ChEBI" id="CHEBI:16810"/>
        <dbReference type="ChEBI" id="CHEBI:29985"/>
        <dbReference type="ChEBI" id="CHEBI:57766"/>
        <dbReference type="ChEBI" id="CHEBI:57980"/>
        <dbReference type="EC" id="2.6.1.9"/>
    </reaction>
</comment>
<comment type="cofactor">
    <cofactor evidence="1">
        <name>pyridoxal 5'-phosphate</name>
        <dbReference type="ChEBI" id="CHEBI:597326"/>
    </cofactor>
</comment>
<comment type="pathway">
    <text evidence="1">Amino-acid biosynthesis; L-histidine biosynthesis; L-histidine from 5-phospho-alpha-D-ribose 1-diphosphate: step 7/9.</text>
</comment>
<comment type="subunit">
    <text evidence="1">Homodimer.</text>
</comment>
<comment type="similarity">
    <text evidence="1">Belongs to the class-II pyridoxal-phosphate-dependent aminotransferase family. Histidinol-phosphate aminotransferase subfamily.</text>
</comment>
<proteinExistence type="inferred from homology"/>
<name>HIS8_ANOFW</name>
<protein>
    <recommendedName>
        <fullName evidence="1">Histidinol-phosphate aminotransferase</fullName>
        <ecNumber evidence="1">2.6.1.9</ecNumber>
    </recommendedName>
    <alternativeName>
        <fullName evidence="1">Imidazole acetol-phosphate transaminase</fullName>
    </alternativeName>
</protein>